<name>GCP2_DROME</name>
<accession>Q9XYP7</accession>
<accession>Q95RT7</accession>
<organism>
    <name type="scientific">Drosophila melanogaster</name>
    <name type="common">Fruit fly</name>
    <dbReference type="NCBI Taxonomy" id="7227"/>
    <lineage>
        <taxon>Eukaryota</taxon>
        <taxon>Metazoa</taxon>
        <taxon>Ecdysozoa</taxon>
        <taxon>Arthropoda</taxon>
        <taxon>Hexapoda</taxon>
        <taxon>Insecta</taxon>
        <taxon>Pterygota</taxon>
        <taxon>Neoptera</taxon>
        <taxon>Endopterygota</taxon>
        <taxon>Diptera</taxon>
        <taxon>Brachycera</taxon>
        <taxon>Muscomorpha</taxon>
        <taxon>Ephydroidea</taxon>
        <taxon>Drosophilidae</taxon>
        <taxon>Drosophila</taxon>
        <taxon>Sophophora</taxon>
    </lineage>
</organism>
<keyword id="KW-0025">Alternative splicing</keyword>
<keyword id="KW-0963">Cytoplasm</keyword>
<keyword id="KW-0206">Cytoskeleton</keyword>
<keyword id="KW-0903">Direct protein sequencing</keyword>
<keyword id="KW-0493">Microtubule</keyword>
<keyword id="KW-0597">Phosphoprotein</keyword>
<keyword id="KW-1185">Reference proteome</keyword>
<sequence>MYALLVFVERYSECKPVSESSSSTSLSAMGLPHGNKTSDVNSAAGSVPTTLAIASTSTILTTSQNVSGSTRLSLTQSQDFPTSTPVNCKKATESDTTPVVFVRRGPMDRNRGAGKDERNDLSVIKERVLNAVSDQSLSGYRSVTNKTGNSPKSMPNDLVTLTDVPDEYRTHLLWEYYKVDGDKVPRAEIAAMPLLSQESMLLDELLHCLTGIRESLLVPQKPIISAVGLAKYDTDFDIHTHLDRSLTHQVREILPLASYFMGVQKIIAATDGLGQVMNSLNEALQELTHDFYLIIVQAEQELRHNRLTLQKLLYYLQPTMWVMHEVWSSLVIIQLSDSRDAEVLTYLHERIKRLEGNKDAQQLIIGLVRKAAKPYMRMLQMWIQKGVIVDRHREFLVVDNEVIHRDELPEHYSDDYWERRYTLRDEQIPSFLAKYSDKILRTGKYLNVIRQCGKRVMPTQEMNLEFDPTSERHVSVINDAYYFAARMLLDVLLTENDLMGHLQSVKRYLLLNQGDFTMQFMDACEDELTKNVDHVLPMTLENLLGLTLRISSARNDPYKDDLHCELLPYDLVTQMSKIMKKEENWQAQPRLDLSGLECFAFTYEVKWPCSLVLNHISISKYQMLFRQLFYCKHVERQLCKIWKENSIARQFEPQAASLYRAAFTLRQRMMNAIQNLEYYMMIEIIEPNWHIFIEKMKTVENVDNVLRLHQDFLDSCLKNCMLTESSHLNRSIFKLCKICLKYCEFIQITQRYFQDAELRSMVRDSADSSESEQESLHCPQIETPLDPTDTFSERVRRFDLEFTQLLISFLKQINSMAKKNTADCFMNLVHRINFNAFYTDQMDKMCVEDAIG</sequence>
<dbReference type="EMBL" id="AF118379">
    <property type="protein sequence ID" value="AAD27816.1"/>
    <property type="molecule type" value="mRNA"/>
</dbReference>
<dbReference type="EMBL" id="AE014298">
    <property type="protein sequence ID" value="AAF48971.2"/>
    <property type="molecule type" value="Genomic_DNA"/>
</dbReference>
<dbReference type="EMBL" id="AE014298">
    <property type="protein sequence ID" value="AAN09502.1"/>
    <property type="molecule type" value="Genomic_DNA"/>
</dbReference>
<dbReference type="EMBL" id="AY061148">
    <property type="protein sequence ID" value="AAL28696.1"/>
    <property type="status" value="ALT_INIT"/>
    <property type="molecule type" value="mRNA"/>
</dbReference>
<dbReference type="RefSeq" id="NP_001285444.1">
    <molecule id="Q9XYP7-2"/>
    <property type="nucleotide sequence ID" value="NM_001298515.1"/>
</dbReference>
<dbReference type="RefSeq" id="NP_523409.1">
    <molecule id="Q9XYP7-2"/>
    <property type="nucleotide sequence ID" value="NM_078685.3"/>
</dbReference>
<dbReference type="RefSeq" id="NP_728265.1">
    <molecule id="Q9XYP7-1"/>
    <property type="nucleotide sequence ID" value="NM_167663.2"/>
</dbReference>
<dbReference type="SMR" id="Q9XYP7"/>
<dbReference type="BioGRID" id="59246">
    <property type="interactions" value="16"/>
</dbReference>
<dbReference type="ComplexPortal" id="CPX-2776">
    <property type="entry name" value="Gamma-tubulin small complex"/>
</dbReference>
<dbReference type="ComplexPortal" id="CPX-2801">
    <property type="entry name" value="Gamma-tubulin ring complex"/>
</dbReference>
<dbReference type="FunCoup" id="Q9XYP7">
    <property type="interactions" value="1699"/>
</dbReference>
<dbReference type="IntAct" id="Q9XYP7">
    <property type="interactions" value="3"/>
</dbReference>
<dbReference type="MINT" id="Q9XYP7"/>
<dbReference type="STRING" id="7227.FBpp0074544"/>
<dbReference type="GlyGen" id="Q9XYP7">
    <property type="glycosylation" value="1 site, 1 O-linked glycan (1 site)"/>
</dbReference>
<dbReference type="iPTMnet" id="Q9XYP7"/>
<dbReference type="PaxDb" id="7227-FBpp0074544"/>
<dbReference type="EnsemblMetazoa" id="FBtr0074776">
    <molecule id="Q9XYP7-1"/>
    <property type="protein sequence ID" value="FBpp0074545"/>
    <property type="gene ID" value="FBgn0026430"/>
</dbReference>
<dbReference type="EnsemblMetazoa" id="FBtr0074777">
    <molecule id="Q9XYP7-2"/>
    <property type="protein sequence ID" value="FBpp0074546"/>
    <property type="gene ID" value="FBgn0026430"/>
</dbReference>
<dbReference type="EnsemblMetazoa" id="FBtr0343590">
    <molecule id="Q9XYP7-2"/>
    <property type="protein sequence ID" value="FBpp0310187"/>
    <property type="gene ID" value="FBgn0026430"/>
</dbReference>
<dbReference type="GeneID" id="32946"/>
<dbReference type="KEGG" id="dme:Dmel_CG3917"/>
<dbReference type="AGR" id="FB:FBgn0026430"/>
<dbReference type="CTD" id="32946"/>
<dbReference type="FlyBase" id="FBgn0026430">
    <property type="gene designation" value="Grip84"/>
</dbReference>
<dbReference type="VEuPathDB" id="VectorBase:FBgn0026430"/>
<dbReference type="eggNOG" id="KOG2001">
    <property type="taxonomic scope" value="Eukaryota"/>
</dbReference>
<dbReference type="GeneTree" id="ENSGT00940000156697"/>
<dbReference type="InParanoid" id="Q9XYP7"/>
<dbReference type="OMA" id="QNMSGDP"/>
<dbReference type="OrthoDB" id="2192946at2759"/>
<dbReference type="PhylomeDB" id="Q9XYP7"/>
<dbReference type="SignaLink" id="Q9XYP7"/>
<dbReference type="BioGRID-ORCS" id="32946">
    <property type="hits" value="0 hits in 1 CRISPR screen"/>
</dbReference>
<dbReference type="CD-CODE" id="2838EF58">
    <property type="entry name" value="Centrosome"/>
</dbReference>
<dbReference type="GenomeRNAi" id="32946"/>
<dbReference type="PRO" id="PR:Q9XYP7"/>
<dbReference type="Proteomes" id="UP000000803">
    <property type="component" value="Chromosome X"/>
</dbReference>
<dbReference type="Bgee" id="FBgn0026430">
    <property type="expression patterns" value="Expressed in spermatocyte cyst cell (Drosophila) in testis and 79 other cell types or tissues"/>
</dbReference>
<dbReference type="ExpressionAtlas" id="Q9XYP7">
    <property type="expression patterns" value="baseline and differential"/>
</dbReference>
<dbReference type="GO" id="GO:0005813">
    <property type="term" value="C:centrosome"/>
    <property type="evidence" value="ECO:0007669"/>
    <property type="project" value="UniProtKB-SubCell"/>
</dbReference>
<dbReference type="GO" id="GO:0000930">
    <property type="term" value="C:gamma-tubulin complex"/>
    <property type="evidence" value="ECO:0000318"/>
    <property type="project" value="GO_Central"/>
</dbReference>
<dbReference type="GO" id="GO:0000931">
    <property type="term" value="C:gamma-tubulin ring complex"/>
    <property type="evidence" value="ECO:0000314"/>
    <property type="project" value="FlyBase"/>
</dbReference>
<dbReference type="GO" id="GO:0008275">
    <property type="term" value="C:gamma-tubulin small complex"/>
    <property type="evidence" value="ECO:0000314"/>
    <property type="project" value="UniProtKB"/>
</dbReference>
<dbReference type="GO" id="GO:0005874">
    <property type="term" value="C:microtubule"/>
    <property type="evidence" value="ECO:0007669"/>
    <property type="project" value="UniProtKB-KW"/>
</dbReference>
<dbReference type="GO" id="GO:0048471">
    <property type="term" value="C:perinuclear region of cytoplasm"/>
    <property type="evidence" value="ECO:0007669"/>
    <property type="project" value="UniProtKB-SubCell"/>
</dbReference>
<dbReference type="GO" id="GO:0000922">
    <property type="term" value="C:spindle pole"/>
    <property type="evidence" value="ECO:0007669"/>
    <property type="project" value="InterPro"/>
</dbReference>
<dbReference type="GO" id="GO:0043015">
    <property type="term" value="F:gamma-tubulin binding"/>
    <property type="evidence" value="ECO:0000314"/>
    <property type="project" value="FlyBase"/>
</dbReference>
<dbReference type="GO" id="GO:0030953">
    <property type="term" value="P:astral microtubule organization"/>
    <property type="evidence" value="ECO:0000315"/>
    <property type="project" value="FlyBase"/>
</dbReference>
<dbReference type="GO" id="GO:0007098">
    <property type="term" value="P:centrosome cycle"/>
    <property type="evidence" value="ECO:0000315"/>
    <property type="project" value="FlyBase"/>
</dbReference>
<dbReference type="GO" id="GO:0031122">
    <property type="term" value="P:cytoplasmic microtubule organization"/>
    <property type="evidence" value="ECO:0000318"/>
    <property type="project" value="GO_Central"/>
</dbReference>
<dbReference type="GO" id="GO:0051321">
    <property type="term" value="P:meiotic cell cycle"/>
    <property type="evidence" value="ECO:0000315"/>
    <property type="project" value="FlyBase"/>
</dbReference>
<dbReference type="GO" id="GO:0007020">
    <property type="term" value="P:microtubule nucleation"/>
    <property type="evidence" value="ECO:0000314"/>
    <property type="project" value="UniProtKB"/>
</dbReference>
<dbReference type="GO" id="GO:0000278">
    <property type="term" value="P:mitotic cell cycle"/>
    <property type="evidence" value="ECO:0000315"/>
    <property type="project" value="FlyBase"/>
</dbReference>
<dbReference type="GO" id="GO:0090221">
    <property type="term" value="P:mitotic spindle-templated microtubule nucleation"/>
    <property type="evidence" value="ECO:0000314"/>
    <property type="project" value="FlyBase"/>
</dbReference>
<dbReference type="GO" id="GO:0051726">
    <property type="term" value="P:regulation of cell cycle"/>
    <property type="evidence" value="ECO:0000315"/>
    <property type="project" value="FlyBase"/>
</dbReference>
<dbReference type="GO" id="GO:0007283">
    <property type="term" value="P:spermatogenesis"/>
    <property type="evidence" value="ECO:0000315"/>
    <property type="project" value="FlyBase"/>
</dbReference>
<dbReference type="GO" id="GO:0051225">
    <property type="term" value="P:spindle assembly"/>
    <property type="evidence" value="ECO:0000315"/>
    <property type="project" value="FlyBase"/>
</dbReference>
<dbReference type="Gene3D" id="1.20.120.1900">
    <property type="entry name" value="Gamma-tubulin complex, C-terminal domain"/>
    <property type="match status" value="1"/>
</dbReference>
<dbReference type="InterPro" id="IPR007259">
    <property type="entry name" value="GCP"/>
</dbReference>
<dbReference type="InterPro" id="IPR040457">
    <property type="entry name" value="GCP_C"/>
</dbReference>
<dbReference type="InterPro" id="IPR042241">
    <property type="entry name" value="GCP_C_sf"/>
</dbReference>
<dbReference type="InterPro" id="IPR041470">
    <property type="entry name" value="GCP_N"/>
</dbReference>
<dbReference type="PANTHER" id="PTHR19302">
    <property type="entry name" value="GAMMA TUBULIN COMPLEX PROTEIN"/>
    <property type="match status" value="1"/>
</dbReference>
<dbReference type="PANTHER" id="PTHR19302:SF13">
    <property type="entry name" value="GAMMA-TUBULIN COMPLEX COMPONENT 2"/>
    <property type="match status" value="1"/>
</dbReference>
<dbReference type="Pfam" id="PF04130">
    <property type="entry name" value="GCP_C_terminal"/>
    <property type="match status" value="1"/>
</dbReference>
<dbReference type="Pfam" id="PF17681">
    <property type="entry name" value="GCP_N_terminal"/>
    <property type="match status" value="1"/>
</dbReference>
<proteinExistence type="evidence at protein level"/>
<evidence type="ECO:0000269" key="1">
    <source>
    </source>
</evidence>
<evidence type="ECO:0000269" key="2">
    <source>
    </source>
</evidence>
<evidence type="ECO:0000303" key="3">
    <source>
    </source>
</evidence>
<evidence type="ECO:0000305" key="4"/>
<reference key="1">
    <citation type="journal article" date="1999" name="J. Cell Biol.">
        <title>Characterization of two related Drosophila gamma-tubulin complexes that differ in their ability to nucleate microtubules.</title>
        <authorList>
            <person name="Oegema K."/>
            <person name="Wiese C."/>
            <person name="Martin O.C."/>
            <person name="Milligan R.A."/>
            <person name="Iwamatsu A."/>
            <person name="Mitchison T.J."/>
            <person name="Zheng Y."/>
        </authorList>
    </citation>
    <scope>NUCLEOTIDE SEQUENCE [MRNA] (ISOFORM 2)</scope>
    <scope>PROTEIN SEQUENCE OF 39-56; 95-106; 166-173; 237-248; 340-347; 358-370; 391-396; 406-412; 418-435; 438-444; 515-519 AND 570-588</scope>
</reference>
<reference key="2">
    <citation type="journal article" date="2000" name="Science">
        <title>The genome sequence of Drosophila melanogaster.</title>
        <authorList>
            <person name="Adams M.D."/>
            <person name="Celniker S.E."/>
            <person name="Holt R.A."/>
            <person name="Evans C.A."/>
            <person name="Gocayne J.D."/>
            <person name="Amanatides P.G."/>
            <person name="Scherer S.E."/>
            <person name="Li P.W."/>
            <person name="Hoskins R.A."/>
            <person name="Galle R.F."/>
            <person name="George R.A."/>
            <person name="Lewis S.E."/>
            <person name="Richards S."/>
            <person name="Ashburner M."/>
            <person name="Henderson S.N."/>
            <person name="Sutton G.G."/>
            <person name="Wortman J.R."/>
            <person name="Yandell M.D."/>
            <person name="Zhang Q."/>
            <person name="Chen L.X."/>
            <person name="Brandon R.C."/>
            <person name="Rogers Y.-H.C."/>
            <person name="Blazej R.G."/>
            <person name="Champe M."/>
            <person name="Pfeiffer B.D."/>
            <person name="Wan K.H."/>
            <person name="Doyle C."/>
            <person name="Baxter E.G."/>
            <person name="Helt G."/>
            <person name="Nelson C.R."/>
            <person name="Miklos G.L.G."/>
            <person name="Abril J.F."/>
            <person name="Agbayani A."/>
            <person name="An H.-J."/>
            <person name="Andrews-Pfannkoch C."/>
            <person name="Baldwin D."/>
            <person name="Ballew R.M."/>
            <person name="Basu A."/>
            <person name="Baxendale J."/>
            <person name="Bayraktaroglu L."/>
            <person name="Beasley E.M."/>
            <person name="Beeson K.Y."/>
            <person name="Benos P.V."/>
            <person name="Berman B.P."/>
            <person name="Bhandari D."/>
            <person name="Bolshakov S."/>
            <person name="Borkova D."/>
            <person name="Botchan M.R."/>
            <person name="Bouck J."/>
            <person name="Brokstein P."/>
            <person name="Brottier P."/>
            <person name="Burtis K.C."/>
            <person name="Busam D.A."/>
            <person name="Butler H."/>
            <person name="Cadieu E."/>
            <person name="Center A."/>
            <person name="Chandra I."/>
            <person name="Cherry J.M."/>
            <person name="Cawley S."/>
            <person name="Dahlke C."/>
            <person name="Davenport L.B."/>
            <person name="Davies P."/>
            <person name="de Pablos B."/>
            <person name="Delcher A."/>
            <person name="Deng Z."/>
            <person name="Mays A.D."/>
            <person name="Dew I."/>
            <person name="Dietz S.M."/>
            <person name="Dodson K."/>
            <person name="Doup L.E."/>
            <person name="Downes M."/>
            <person name="Dugan-Rocha S."/>
            <person name="Dunkov B.C."/>
            <person name="Dunn P."/>
            <person name="Durbin K.J."/>
            <person name="Evangelista C.C."/>
            <person name="Ferraz C."/>
            <person name="Ferriera S."/>
            <person name="Fleischmann W."/>
            <person name="Fosler C."/>
            <person name="Gabrielian A.E."/>
            <person name="Garg N.S."/>
            <person name="Gelbart W.M."/>
            <person name="Glasser K."/>
            <person name="Glodek A."/>
            <person name="Gong F."/>
            <person name="Gorrell J.H."/>
            <person name="Gu Z."/>
            <person name="Guan P."/>
            <person name="Harris M."/>
            <person name="Harris N.L."/>
            <person name="Harvey D.A."/>
            <person name="Heiman T.J."/>
            <person name="Hernandez J.R."/>
            <person name="Houck J."/>
            <person name="Hostin D."/>
            <person name="Houston K.A."/>
            <person name="Howland T.J."/>
            <person name="Wei M.-H."/>
            <person name="Ibegwam C."/>
            <person name="Jalali M."/>
            <person name="Kalush F."/>
            <person name="Karpen G.H."/>
            <person name="Ke Z."/>
            <person name="Kennison J.A."/>
            <person name="Ketchum K.A."/>
            <person name="Kimmel B.E."/>
            <person name="Kodira C.D."/>
            <person name="Kraft C.L."/>
            <person name="Kravitz S."/>
            <person name="Kulp D."/>
            <person name="Lai Z."/>
            <person name="Lasko P."/>
            <person name="Lei Y."/>
            <person name="Levitsky A.A."/>
            <person name="Li J.H."/>
            <person name="Li Z."/>
            <person name="Liang Y."/>
            <person name="Lin X."/>
            <person name="Liu X."/>
            <person name="Mattei B."/>
            <person name="McIntosh T.C."/>
            <person name="McLeod M.P."/>
            <person name="McPherson D."/>
            <person name="Merkulov G."/>
            <person name="Milshina N.V."/>
            <person name="Mobarry C."/>
            <person name="Morris J."/>
            <person name="Moshrefi A."/>
            <person name="Mount S.M."/>
            <person name="Moy M."/>
            <person name="Murphy B."/>
            <person name="Murphy L."/>
            <person name="Muzny D.M."/>
            <person name="Nelson D.L."/>
            <person name="Nelson D.R."/>
            <person name="Nelson K.A."/>
            <person name="Nixon K."/>
            <person name="Nusskern D.R."/>
            <person name="Pacleb J.M."/>
            <person name="Palazzolo M."/>
            <person name="Pittman G.S."/>
            <person name="Pan S."/>
            <person name="Pollard J."/>
            <person name="Puri V."/>
            <person name="Reese M.G."/>
            <person name="Reinert K."/>
            <person name="Remington K."/>
            <person name="Saunders R.D.C."/>
            <person name="Scheeler F."/>
            <person name="Shen H."/>
            <person name="Shue B.C."/>
            <person name="Siden-Kiamos I."/>
            <person name="Simpson M."/>
            <person name="Skupski M.P."/>
            <person name="Smith T.J."/>
            <person name="Spier E."/>
            <person name="Spradling A.C."/>
            <person name="Stapleton M."/>
            <person name="Strong R."/>
            <person name="Sun E."/>
            <person name="Svirskas R."/>
            <person name="Tector C."/>
            <person name="Turner R."/>
            <person name="Venter E."/>
            <person name="Wang A.H."/>
            <person name="Wang X."/>
            <person name="Wang Z.-Y."/>
            <person name="Wassarman D.A."/>
            <person name="Weinstock G.M."/>
            <person name="Weissenbach J."/>
            <person name="Williams S.M."/>
            <person name="Woodage T."/>
            <person name="Worley K.C."/>
            <person name="Wu D."/>
            <person name="Yang S."/>
            <person name="Yao Q.A."/>
            <person name="Ye J."/>
            <person name="Yeh R.-F."/>
            <person name="Zaveri J.S."/>
            <person name="Zhan M."/>
            <person name="Zhang G."/>
            <person name="Zhao Q."/>
            <person name="Zheng L."/>
            <person name="Zheng X.H."/>
            <person name="Zhong F.N."/>
            <person name="Zhong W."/>
            <person name="Zhou X."/>
            <person name="Zhu S.C."/>
            <person name="Zhu X."/>
            <person name="Smith H.O."/>
            <person name="Gibbs R.A."/>
            <person name="Myers E.W."/>
            <person name="Rubin G.M."/>
            <person name="Venter J.C."/>
        </authorList>
    </citation>
    <scope>NUCLEOTIDE SEQUENCE [LARGE SCALE GENOMIC DNA]</scope>
    <source>
        <strain>Berkeley</strain>
    </source>
</reference>
<reference key="3">
    <citation type="journal article" date="2002" name="Genome Biol.">
        <title>Annotation of the Drosophila melanogaster euchromatic genome: a systematic review.</title>
        <authorList>
            <person name="Misra S."/>
            <person name="Crosby M.A."/>
            <person name="Mungall C.J."/>
            <person name="Matthews B.B."/>
            <person name="Campbell K.S."/>
            <person name="Hradecky P."/>
            <person name="Huang Y."/>
            <person name="Kaminker J.S."/>
            <person name="Millburn G.H."/>
            <person name="Prochnik S.E."/>
            <person name="Smith C.D."/>
            <person name="Tupy J.L."/>
            <person name="Whitfield E.J."/>
            <person name="Bayraktaroglu L."/>
            <person name="Berman B.P."/>
            <person name="Bettencourt B.R."/>
            <person name="Celniker S.E."/>
            <person name="de Grey A.D.N.J."/>
            <person name="Drysdale R.A."/>
            <person name="Harris N.L."/>
            <person name="Richter J."/>
            <person name="Russo S."/>
            <person name="Schroeder A.J."/>
            <person name="Shu S.Q."/>
            <person name="Stapleton M."/>
            <person name="Yamada C."/>
            <person name="Ashburner M."/>
            <person name="Gelbart W.M."/>
            <person name="Rubin G.M."/>
            <person name="Lewis S.E."/>
        </authorList>
    </citation>
    <scope>GENOME REANNOTATION</scope>
    <scope>ALTERNATIVE SPLICING</scope>
    <source>
        <strain>Berkeley</strain>
    </source>
</reference>
<reference key="4">
    <citation type="journal article" date="2002" name="Genome Biol.">
        <title>A Drosophila full-length cDNA resource.</title>
        <authorList>
            <person name="Stapleton M."/>
            <person name="Carlson J.W."/>
            <person name="Brokstein P."/>
            <person name="Yu C."/>
            <person name="Champe M."/>
            <person name="George R.A."/>
            <person name="Guarin H."/>
            <person name="Kronmiller B."/>
            <person name="Pacleb J.M."/>
            <person name="Park S."/>
            <person name="Wan K.H."/>
            <person name="Rubin G.M."/>
            <person name="Celniker S.E."/>
        </authorList>
    </citation>
    <scope>NUCLEOTIDE SEQUENCE [LARGE SCALE MRNA] OF 291-852 (ISOFORM 1)</scope>
    <source>
        <strain>Berkeley</strain>
        <tissue>Embryo</tissue>
    </source>
</reference>
<reference key="5">
    <citation type="journal article" date="2007" name="Mol. Biosyst.">
        <title>An integrated chemical, mass spectrometric and computational strategy for (quantitative) phosphoproteomics: application to Drosophila melanogaster Kc167 cells.</title>
        <authorList>
            <person name="Bodenmiller B."/>
            <person name="Mueller L.N."/>
            <person name="Pedrioli P.G.A."/>
            <person name="Pflieger D."/>
            <person name="Juenger M.A."/>
            <person name="Eng J.K."/>
            <person name="Aebersold R."/>
            <person name="Tao W.A."/>
        </authorList>
    </citation>
    <scope>PHOSPHORYLATION [LARGE SCALE ANALYSIS] AT SER-73</scope>
    <scope>IDENTIFICATION BY MASS SPECTROMETRY</scope>
</reference>
<reference key="6">
    <citation type="journal article" date="2020" name="Nat. Cell Biol.">
        <title>A perinuclear microtubule-organizing centre controls nuclear positioning and basement membrane secretion.</title>
        <authorList>
            <person name="Zheng Y."/>
            <person name="Buchwalter R.A."/>
            <person name="Zheng C."/>
            <person name="Wight E.M."/>
            <person name="Chen J.V."/>
            <person name="Megraw T.L."/>
        </authorList>
    </citation>
    <scope>SUBCELLULAR LOCATION</scope>
</reference>
<gene>
    <name type="primary">Grip84</name>
    <name type="ORF">CG3917</name>
</gene>
<protein>
    <recommendedName>
        <fullName>Gamma-tubulin complex component 2 homolog</fullName>
    </recommendedName>
    <alternativeName>
        <fullName>Gamma-ring complex protein 84 kDa</fullName>
        <shortName>d84p</shortName>
        <shortName>dGrip84</shortName>
    </alternativeName>
</protein>
<comment type="subunit">
    <text>Gamma-tubulin small complex (Gamma TuSC) is a heterotetrameric complex which contains two molecules of gamma-tubulin, and one molecule each of Dgrip84 and Dgrip91. The gamma-tubulin in this complex binds preferentially to GDP over GTP.</text>
</comment>
<comment type="subcellular location">
    <subcellularLocation>
        <location evidence="4">Cytoplasm</location>
        <location evidence="4">Cytoskeleton</location>
        <location evidence="4">Microtubule organizing center</location>
        <location evidence="4">Centrosome</location>
    </subcellularLocation>
    <subcellularLocation>
        <location evidence="2">Cytoplasm</location>
        <location evidence="2">Cytoskeleton</location>
        <location evidence="2">Microtubule organizing center</location>
    </subcellularLocation>
    <subcellularLocation>
        <location evidence="2">Cytoplasm</location>
        <location evidence="2">Perinuclear region</location>
    </subcellularLocation>
    <text evidence="2">In the fat body, localizes to a perinuclear non-centrosomal microtubule-organizing centers (ncMTOCs).</text>
</comment>
<comment type="alternative products">
    <event type="alternative splicing"/>
    <isoform>
        <id>Q9XYP7-1</id>
        <name>1</name>
        <name>B</name>
        <sequence type="displayed"/>
    </isoform>
    <isoform>
        <id>Q9XYP7-2</id>
        <name>2</name>
        <name>C</name>
        <sequence type="described" ref="VSP_001619"/>
    </isoform>
</comment>
<comment type="similarity">
    <text evidence="4">Belongs to the TUBGCP family.</text>
</comment>
<comment type="sequence caution" evidence="4">
    <conflict type="erroneous initiation">
        <sequence resource="EMBL-CDS" id="AAL28696"/>
    </conflict>
</comment>
<feature type="chain" id="PRO_0000078115" description="Gamma-tubulin complex component 2 homolog">
    <location>
        <begin position="1"/>
        <end position="852"/>
    </location>
</feature>
<feature type="modified residue" description="Phosphoserine" evidence="1">
    <location>
        <position position="73"/>
    </location>
</feature>
<feature type="splice variant" id="VSP_001619" description="In isoform 2." evidence="3">
    <location>
        <begin position="747"/>
        <end position="779"/>
    </location>
</feature>
<feature type="sequence conflict" description="In Ref. 1; AA sequence." evidence="4" ref="1">
    <original>H</original>
    <variation>S</variation>
    <location>
        <position position="171"/>
    </location>
</feature>